<comment type="function">
    <text evidence="1">Catalyzes the transfer of an acyl group from acyl-phosphate (acyl-PO(4)) to glycerol-3-phosphate (G3P) to form lysophosphatidic acid (LPA). This enzyme utilizes acyl-phosphate as fatty acyl donor, but not acyl-CoA or acyl-ACP.</text>
</comment>
<comment type="catalytic activity">
    <reaction evidence="1">
        <text>an acyl phosphate + sn-glycerol 3-phosphate = a 1-acyl-sn-glycero-3-phosphate + phosphate</text>
        <dbReference type="Rhea" id="RHEA:34075"/>
        <dbReference type="ChEBI" id="CHEBI:43474"/>
        <dbReference type="ChEBI" id="CHEBI:57597"/>
        <dbReference type="ChEBI" id="CHEBI:57970"/>
        <dbReference type="ChEBI" id="CHEBI:59918"/>
        <dbReference type="EC" id="2.3.1.275"/>
    </reaction>
</comment>
<comment type="pathway">
    <text evidence="1">Lipid metabolism; phospholipid metabolism.</text>
</comment>
<comment type="subunit">
    <text evidence="1">Probably interacts with PlsX.</text>
</comment>
<comment type="subcellular location">
    <subcellularLocation>
        <location evidence="1">Cell inner membrane</location>
        <topology evidence="1">Multi-pass membrane protein</topology>
    </subcellularLocation>
</comment>
<comment type="similarity">
    <text evidence="1">Belongs to the PlsY family.</text>
</comment>
<feature type="chain" id="PRO_0000250315" description="Glycerol-3-phosphate acyltransferase">
    <location>
        <begin position="1"/>
        <end position="202"/>
    </location>
</feature>
<feature type="transmembrane region" description="Helical" evidence="1">
    <location>
        <begin position="1"/>
        <end position="21"/>
    </location>
</feature>
<feature type="transmembrane region" description="Helical" evidence="1">
    <location>
        <begin position="84"/>
        <end position="104"/>
    </location>
</feature>
<feature type="transmembrane region" description="Helical" evidence="1">
    <location>
        <begin position="116"/>
        <end position="136"/>
    </location>
</feature>
<feature type="transmembrane region" description="Helical" evidence="1">
    <location>
        <begin position="143"/>
        <end position="163"/>
    </location>
</feature>
<name>PLSY_NITMU</name>
<reference key="1">
    <citation type="submission" date="2005-08" db="EMBL/GenBank/DDBJ databases">
        <title>Complete sequence of chromosome 1 of Nitrosospira multiformis ATCC 25196.</title>
        <authorList>
            <person name="Copeland A."/>
            <person name="Lucas S."/>
            <person name="Lapidus A."/>
            <person name="Barry K."/>
            <person name="Detter J.C."/>
            <person name="Glavina T."/>
            <person name="Hammon N."/>
            <person name="Israni S."/>
            <person name="Pitluck S."/>
            <person name="Chain P."/>
            <person name="Malfatti S."/>
            <person name="Shin M."/>
            <person name="Vergez L."/>
            <person name="Schmutz J."/>
            <person name="Larimer F."/>
            <person name="Land M."/>
            <person name="Hauser L."/>
            <person name="Kyrpides N."/>
            <person name="Lykidis A."/>
            <person name="Richardson P."/>
        </authorList>
    </citation>
    <scope>NUCLEOTIDE SEQUENCE [LARGE SCALE GENOMIC DNA]</scope>
    <source>
        <strain>ATCC 25196 / NCIMB 11849 / C 71</strain>
    </source>
</reference>
<evidence type="ECO:0000255" key="1">
    <source>
        <dbReference type="HAMAP-Rule" id="MF_01043"/>
    </source>
</evidence>
<organism>
    <name type="scientific">Nitrosospira multiformis (strain ATCC 25196 / NCIMB 11849 / C 71)</name>
    <dbReference type="NCBI Taxonomy" id="323848"/>
    <lineage>
        <taxon>Bacteria</taxon>
        <taxon>Pseudomonadati</taxon>
        <taxon>Pseudomonadota</taxon>
        <taxon>Betaproteobacteria</taxon>
        <taxon>Nitrosomonadales</taxon>
        <taxon>Nitrosomonadaceae</taxon>
        <taxon>Nitrosospira</taxon>
    </lineage>
</organism>
<keyword id="KW-0997">Cell inner membrane</keyword>
<keyword id="KW-1003">Cell membrane</keyword>
<keyword id="KW-0444">Lipid biosynthesis</keyword>
<keyword id="KW-0443">Lipid metabolism</keyword>
<keyword id="KW-0472">Membrane</keyword>
<keyword id="KW-0594">Phospholipid biosynthesis</keyword>
<keyword id="KW-1208">Phospholipid metabolism</keyword>
<keyword id="KW-1185">Reference proteome</keyword>
<keyword id="KW-0808">Transferase</keyword>
<keyword id="KW-0812">Transmembrane</keyword>
<keyword id="KW-1133">Transmembrane helix</keyword>
<gene>
    <name evidence="1" type="primary">plsY</name>
    <name type="ordered locus">Nmul_A2062</name>
</gene>
<sequence>MTLIALILPAYLLGSISFGVLASRFFQLPDPRTYGSGNPGATNVLRSGKKSAAIFTLLGDGGKGWLAVALAEYSAPLLELGNEAVAAAALGVFLGHLFPVFLHFKGGKGVATALGILLGFNPWMGLLAATIWLAVALMWRFSSLAAIVAASLAPFYALFFLGFEARTLVVFIMSLLLIWRHKSNIAGLIAGSESRIGKRSTS</sequence>
<proteinExistence type="inferred from homology"/>
<dbReference type="EC" id="2.3.1.275" evidence="1"/>
<dbReference type="EMBL" id="CP000103">
    <property type="protein sequence ID" value="ABB75356.1"/>
    <property type="molecule type" value="Genomic_DNA"/>
</dbReference>
<dbReference type="RefSeq" id="WP_011381367.1">
    <property type="nucleotide sequence ID" value="NC_007614.1"/>
</dbReference>
<dbReference type="SMR" id="Q2Y7B5"/>
<dbReference type="STRING" id="323848.Nmul_A2062"/>
<dbReference type="KEGG" id="nmu:Nmul_A2062"/>
<dbReference type="eggNOG" id="COG0344">
    <property type="taxonomic scope" value="Bacteria"/>
</dbReference>
<dbReference type="HOGENOM" id="CLU_081254_0_0_4"/>
<dbReference type="OrthoDB" id="9777124at2"/>
<dbReference type="UniPathway" id="UPA00085"/>
<dbReference type="Proteomes" id="UP000002718">
    <property type="component" value="Chromosome"/>
</dbReference>
<dbReference type="GO" id="GO:0005886">
    <property type="term" value="C:plasma membrane"/>
    <property type="evidence" value="ECO:0007669"/>
    <property type="project" value="UniProtKB-SubCell"/>
</dbReference>
<dbReference type="GO" id="GO:0043772">
    <property type="term" value="F:acyl-phosphate glycerol-3-phosphate acyltransferase activity"/>
    <property type="evidence" value="ECO:0007669"/>
    <property type="project" value="UniProtKB-UniRule"/>
</dbReference>
<dbReference type="GO" id="GO:0008654">
    <property type="term" value="P:phospholipid biosynthetic process"/>
    <property type="evidence" value="ECO:0007669"/>
    <property type="project" value="UniProtKB-UniRule"/>
</dbReference>
<dbReference type="HAMAP" id="MF_01043">
    <property type="entry name" value="PlsY"/>
    <property type="match status" value="1"/>
</dbReference>
<dbReference type="InterPro" id="IPR003811">
    <property type="entry name" value="G3P_acylTferase_PlsY"/>
</dbReference>
<dbReference type="NCBIfam" id="TIGR00023">
    <property type="entry name" value="glycerol-3-phosphate 1-O-acyltransferase PlsY"/>
    <property type="match status" value="1"/>
</dbReference>
<dbReference type="PANTHER" id="PTHR30309:SF0">
    <property type="entry name" value="GLYCEROL-3-PHOSPHATE ACYLTRANSFERASE-RELATED"/>
    <property type="match status" value="1"/>
</dbReference>
<dbReference type="PANTHER" id="PTHR30309">
    <property type="entry name" value="INNER MEMBRANE PROTEIN YGIH"/>
    <property type="match status" value="1"/>
</dbReference>
<dbReference type="Pfam" id="PF02660">
    <property type="entry name" value="G3P_acyltransf"/>
    <property type="match status" value="1"/>
</dbReference>
<dbReference type="SMART" id="SM01207">
    <property type="entry name" value="G3P_acyltransf"/>
    <property type="match status" value="1"/>
</dbReference>
<protein>
    <recommendedName>
        <fullName evidence="1">Glycerol-3-phosphate acyltransferase</fullName>
    </recommendedName>
    <alternativeName>
        <fullName evidence="1">Acyl-PO4 G3P acyltransferase</fullName>
    </alternativeName>
    <alternativeName>
        <fullName evidence="1">Acyl-phosphate--glycerol-3-phosphate acyltransferase</fullName>
    </alternativeName>
    <alternativeName>
        <fullName evidence="1">G3P acyltransferase</fullName>
        <shortName evidence="1">GPAT</shortName>
        <ecNumber evidence="1">2.3.1.275</ecNumber>
    </alternativeName>
    <alternativeName>
        <fullName evidence="1">Lysophosphatidic acid synthase</fullName>
        <shortName evidence="1">LPA synthase</shortName>
    </alternativeName>
</protein>
<accession>Q2Y7B5</accession>